<feature type="chain" id="PRO_0000346122" description="Cell division protein ZapA">
    <location>
        <begin position="1"/>
        <end position="100"/>
    </location>
</feature>
<feature type="coiled-coil region" evidence="2">
    <location>
        <begin position="21"/>
        <end position="45"/>
    </location>
</feature>
<accession>Q4QM44</accession>
<protein>
    <recommendedName>
        <fullName>Cell division protein ZapA</fullName>
    </recommendedName>
    <alternativeName>
        <fullName>Z ring-associated protein ZapA</fullName>
    </alternativeName>
</protein>
<organism>
    <name type="scientific">Haemophilus influenzae (strain 86-028NP)</name>
    <dbReference type="NCBI Taxonomy" id="281310"/>
    <lineage>
        <taxon>Bacteria</taxon>
        <taxon>Pseudomonadati</taxon>
        <taxon>Pseudomonadota</taxon>
        <taxon>Gammaproteobacteria</taxon>
        <taxon>Pasteurellales</taxon>
        <taxon>Pasteurellaceae</taxon>
        <taxon>Haemophilus</taxon>
    </lineage>
</organism>
<gene>
    <name type="primary">zapA</name>
    <name type="ordered locus">NTHI1025</name>
</gene>
<keyword id="KW-0131">Cell cycle</keyword>
<keyword id="KW-0132">Cell division</keyword>
<keyword id="KW-0175">Coiled coil</keyword>
<keyword id="KW-0963">Cytoplasm</keyword>
<keyword id="KW-0717">Septation</keyword>
<name>ZAPA_HAEI8</name>
<sequence>MSLKLVEILVLGQVLRLNVPIEQEELLRQAARNLDILVSEMKEKTGLIQLDRVLSIVALNLSFELSQEKNKTAKIEEVLRTGIQQLDHSLENIRVTKEPH</sequence>
<dbReference type="EMBL" id="CP000057">
    <property type="protein sequence ID" value="AAX87903.1"/>
    <property type="molecule type" value="Genomic_DNA"/>
</dbReference>
<dbReference type="RefSeq" id="WP_005651366.1">
    <property type="nucleotide sequence ID" value="NC_007146.2"/>
</dbReference>
<dbReference type="SMR" id="Q4QM44"/>
<dbReference type="KEGG" id="hit:NTHI1025"/>
<dbReference type="HOGENOM" id="CLU_116623_3_0_6"/>
<dbReference type="Proteomes" id="UP000002525">
    <property type="component" value="Chromosome"/>
</dbReference>
<dbReference type="GO" id="GO:0032153">
    <property type="term" value="C:cell division site"/>
    <property type="evidence" value="ECO:0007669"/>
    <property type="project" value="TreeGrafter"/>
</dbReference>
<dbReference type="GO" id="GO:0030428">
    <property type="term" value="C:cell septum"/>
    <property type="evidence" value="ECO:0007669"/>
    <property type="project" value="TreeGrafter"/>
</dbReference>
<dbReference type="GO" id="GO:0005829">
    <property type="term" value="C:cytosol"/>
    <property type="evidence" value="ECO:0007669"/>
    <property type="project" value="TreeGrafter"/>
</dbReference>
<dbReference type="GO" id="GO:0000917">
    <property type="term" value="P:division septum assembly"/>
    <property type="evidence" value="ECO:0007669"/>
    <property type="project" value="UniProtKB-KW"/>
</dbReference>
<dbReference type="GO" id="GO:0043093">
    <property type="term" value="P:FtsZ-dependent cytokinesis"/>
    <property type="evidence" value="ECO:0007669"/>
    <property type="project" value="TreeGrafter"/>
</dbReference>
<dbReference type="GO" id="GO:0000921">
    <property type="term" value="P:septin ring assembly"/>
    <property type="evidence" value="ECO:0007669"/>
    <property type="project" value="TreeGrafter"/>
</dbReference>
<dbReference type="Gene3D" id="3.30.160.880">
    <property type="entry name" value="Cell division protein ZapA protomer, N-terminal domain"/>
    <property type="match status" value="1"/>
</dbReference>
<dbReference type="InterPro" id="IPR007838">
    <property type="entry name" value="Cell_div_ZapA-like"/>
</dbReference>
<dbReference type="InterPro" id="IPR036192">
    <property type="entry name" value="Cell_div_ZapA-like_sf"/>
</dbReference>
<dbReference type="InterPro" id="IPR042233">
    <property type="entry name" value="Cell_div_ZapA_N"/>
</dbReference>
<dbReference type="PANTHER" id="PTHR34981">
    <property type="entry name" value="CELL DIVISION PROTEIN ZAPA"/>
    <property type="match status" value="1"/>
</dbReference>
<dbReference type="PANTHER" id="PTHR34981:SF1">
    <property type="entry name" value="CELL DIVISION PROTEIN ZAPA"/>
    <property type="match status" value="1"/>
</dbReference>
<dbReference type="Pfam" id="PF05164">
    <property type="entry name" value="ZapA"/>
    <property type="match status" value="1"/>
</dbReference>
<dbReference type="SUPFAM" id="SSF102829">
    <property type="entry name" value="Cell division protein ZapA-like"/>
    <property type="match status" value="1"/>
</dbReference>
<evidence type="ECO:0000250" key="1"/>
<evidence type="ECO:0000255" key="2"/>
<evidence type="ECO:0000305" key="3"/>
<reference key="1">
    <citation type="journal article" date="2005" name="J. Bacteriol.">
        <title>Genomic sequence of an otitis media isolate of nontypeable Haemophilus influenzae: comparative study with H. influenzae serotype d, strain KW20.</title>
        <authorList>
            <person name="Harrison A."/>
            <person name="Dyer D.W."/>
            <person name="Gillaspy A."/>
            <person name="Ray W.C."/>
            <person name="Mungur R."/>
            <person name="Carson M.B."/>
            <person name="Zhong H."/>
            <person name="Gipson J."/>
            <person name="Gipson M."/>
            <person name="Johnson L.S."/>
            <person name="Lewis L."/>
            <person name="Bakaletz L.O."/>
            <person name="Munson R.S. Jr."/>
        </authorList>
    </citation>
    <scope>NUCLEOTIDE SEQUENCE [LARGE SCALE GENOMIC DNA]</scope>
    <source>
        <strain>86-028NP</strain>
    </source>
</reference>
<comment type="function">
    <text evidence="1">Activator of cell division through the inhibition of FtsZ GTPase activity, therefore promoting FtsZ assembly into bundles of protofilaments necessary for the formation of the division Z ring. It is recruited early at mid-cell but it is not essential for cell division (By similarity).</text>
</comment>
<comment type="subunit">
    <text evidence="1">Homodimer. Interacts with FtsZ (By similarity).</text>
</comment>
<comment type="subcellular location">
    <subcellularLocation>
        <location evidence="1">Cytoplasm</location>
    </subcellularLocation>
    <text evidence="1">Localizes at mid-cell.</text>
</comment>
<comment type="similarity">
    <text evidence="3">Belongs to the ZapA family. Type 1 subfamily.</text>
</comment>
<proteinExistence type="inferred from homology"/>